<reference key="1">
    <citation type="journal article" date="2000" name="Science">
        <title>The genome sequence of Drosophila melanogaster.</title>
        <authorList>
            <person name="Adams M.D."/>
            <person name="Celniker S.E."/>
            <person name="Holt R.A."/>
            <person name="Evans C.A."/>
            <person name="Gocayne J.D."/>
            <person name="Amanatides P.G."/>
            <person name="Scherer S.E."/>
            <person name="Li P.W."/>
            <person name="Hoskins R.A."/>
            <person name="Galle R.F."/>
            <person name="George R.A."/>
            <person name="Lewis S.E."/>
            <person name="Richards S."/>
            <person name="Ashburner M."/>
            <person name="Henderson S.N."/>
            <person name="Sutton G.G."/>
            <person name="Wortman J.R."/>
            <person name="Yandell M.D."/>
            <person name="Zhang Q."/>
            <person name="Chen L.X."/>
            <person name="Brandon R.C."/>
            <person name="Rogers Y.-H.C."/>
            <person name="Blazej R.G."/>
            <person name="Champe M."/>
            <person name="Pfeiffer B.D."/>
            <person name="Wan K.H."/>
            <person name="Doyle C."/>
            <person name="Baxter E.G."/>
            <person name="Helt G."/>
            <person name="Nelson C.R."/>
            <person name="Miklos G.L.G."/>
            <person name="Abril J.F."/>
            <person name="Agbayani A."/>
            <person name="An H.-J."/>
            <person name="Andrews-Pfannkoch C."/>
            <person name="Baldwin D."/>
            <person name="Ballew R.M."/>
            <person name="Basu A."/>
            <person name="Baxendale J."/>
            <person name="Bayraktaroglu L."/>
            <person name="Beasley E.M."/>
            <person name="Beeson K.Y."/>
            <person name="Benos P.V."/>
            <person name="Berman B.P."/>
            <person name="Bhandari D."/>
            <person name="Bolshakov S."/>
            <person name="Borkova D."/>
            <person name="Botchan M.R."/>
            <person name="Bouck J."/>
            <person name="Brokstein P."/>
            <person name="Brottier P."/>
            <person name="Burtis K.C."/>
            <person name="Busam D.A."/>
            <person name="Butler H."/>
            <person name="Cadieu E."/>
            <person name="Center A."/>
            <person name="Chandra I."/>
            <person name="Cherry J.M."/>
            <person name="Cawley S."/>
            <person name="Dahlke C."/>
            <person name="Davenport L.B."/>
            <person name="Davies P."/>
            <person name="de Pablos B."/>
            <person name="Delcher A."/>
            <person name="Deng Z."/>
            <person name="Mays A.D."/>
            <person name="Dew I."/>
            <person name="Dietz S.M."/>
            <person name="Dodson K."/>
            <person name="Doup L.E."/>
            <person name="Downes M."/>
            <person name="Dugan-Rocha S."/>
            <person name="Dunkov B.C."/>
            <person name="Dunn P."/>
            <person name="Durbin K.J."/>
            <person name="Evangelista C.C."/>
            <person name="Ferraz C."/>
            <person name="Ferriera S."/>
            <person name="Fleischmann W."/>
            <person name="Fosler C."/>
            <person name="Gabrielian A.E."/>
            <person name="Garg N.S."/>
            <person name="Gelbart W.M."/>
            <person name="Glasser K."/>
            <person name="Glodek A."/>
            <person name="Gong F."/>
            <person name="Gorrell J.H."/>
            <person name="Gu Z."/>
            <person name="Guan P."/>
            <person name="Harris M."/>
            <person name="Harris N.L."/>
            <person name="Harvey D.A."/>
            <person name="Heiman T.J."/>
            <person name="Hernandez J.R."/>
            <person name="Houck J."/>
            <person name="Hostin D."/>
            <person name="Houston K.A."/>
            <person name="Howland T.J."/>
            <person name="Wei M.-H."/>
            <person name="Ibegwam C."/>
            <person name="Jalali M."/>
            <person name="Kalush F."/>
            <person name="Karpen G.H."/>
            <person name="Ke Z."/>
            <person name="Kennison J.A."/>
            <person name="Ketchum K.A."/>
            <person name="Kimmel B.E."/>
            <person name="Kodira C.D."/>
            <person name="Kraft C.L."/>
            <person name="Kravitz S."/>
            <person name="Kulp D."/>
            <person name="Lai Z."/>
            <person name="Lasko P."/>
            <person name="Lei Y."/>
            <person name="Levitsky A.A."/>
            <person name="Li J.H."/>
            <person name="Li Z."/>
            <person name="Liang Y."/>
            <person name="Lin X."/>
            <person name="Liu X."/>
            <person name="Mattei B."/>
            <person name="McIntosh T.C."/>
            <person name="McLeod M.P."/>
            <person name="McPherson D."/>
            <person name="Merkulov G."/>
            <person name="Milshina N.V."/>
            <person name="Mobarry C."/>
            <person name="Morris J."/>
            <person name="Moshrefi A."/>
            <person name="Mount S.M."/>
            <person name="Moy M."/>
            <person name="Murphy B."/>
            <person name="Murphy L."/>
            <person name="Muzny D.M."/>
            <person name="Nelson D.L."/>
            <person name="Nelson D.R."/>
            <person name="Nelson K.A."/>
            <person name="Nixon K."/>
            <person name="Nusskern D.R."/>
            <person name="Pacleb J.M."/>
            <person name="Palazzolo M."/>
            <person name="Pittman G.S."/>
            <person name="Pan S."/>
            <person name="Pollard J."/>
            <person name="Puri V."/>
            <person name="Reese M.G."/>
            <person name="Reinert K."/>
            <person name="Remington K."/>
            <person name="Saunders R.D.C."/>
            <person name="Scheeler F."/>
            <person name="Shen H."/>
            <person name="Shue B.C."/>
            <person name="Siden-Kiamos I."/>
            <person name="Simpson M."/>
            <person name="Skupski M.P."/>
            <person name="Smith T.J."/>
            <person name="Spier E."/>
            <person name="Spradling A.C."/>
            <person name="Stapleton M."/>
            <person name="Strong R."/>
            <person name="Sun E."/>
            <person name="Svirskas R."/>
            <person name="Tector C."/>
            <person name="Turner R."/>
            <person name="Venter E."/>
            <person name="Wang A.H."/>
            <person name="Wang X."/>
            <person name="Wang Z.-Y."/>
            <person name="Wassarman D.A."/>
            <person name="Weinstock G.M."/>
            <person name="Weissenbach J."/>
            <person name="Williams S.M."/>
            <person name="Woodage T."/>
            <person name="Worley K.C."/>
            <person name="Wu D."/>
            <person name="Yang S."/>
            <person name="Yao Q.A."/>
            <person name="Ye J."/>
            <person name="Yeh R.-F."/>
            <person name="Zaveri J.S."/>
            <person name="Zhan M."/>
            <person name="Zhang G."/>
            <person name="Zhao Q."/>
            <person name="Zheng L."/>
            <person name="Zheng X.H."/>
            <person name="Zhong F.N."/>
            <person name="Zhong W."/>
            <person name="Zhou X."/>
            <person name="Zhu S.C."/>
            <person name="Zhu X."/>
            <person name="Smith H.O."/>
            <person name="Gibbs R.A."/>
            <person name="Myers E.W."/>
            <person name="Rubin G.M."/>
            <person name="Venter J.C."/>
        </authorList>
    </citation>
    <scope>NUCLEOTIDE SEQUENCE [LARGE SCALE GENOMIC DNA]</scope>
    <source>
        <strain>Berkeley</strain>
    </source>
</reference>
<reference key="2">
    <citation type="journal article" date="2002" name="Genome Biol.">
        <title>Annotation of the Drosophila melanogaster euchromatic genome: a systematic review.</title>
        <authorList>
            <person name="Misra S."/>
            <person name="Crosby M.A."/>
            <person name="Mungall C.J."/>
            <person name="Matthews B.B."/>
            <person name="Campbell K.S."/>
            <person name="Hradecky P."/>
            <person name="Huang Y."/>
            <person name="Kaminker J.S."/>
            <person name="Millburn G.H."/>
            <person name="Prochnik S.E."/>
            <person name="Smith C.D."/>
            <person name="Tupy J.L."/>
            <person name="Whitfield E.J."/>
            <person name="Bayraktaroglu L."/>
            <person name="Berman B.P."/>
            <person name="Bettencourt B.R."/>
            <person name="Celniker S.E."/>
            <person name="de Grey A.D.N.J."/>
            <person name="Drysdale R.A."/>
            <person name="Harris N.L."/>
            <person name="Richter J."/>
            <person name="Russo S."/>
            <person name="Schroeder A.J."/>
            <person name="Shu S.Q."/>
            <person name="Stapleton M."/>
            <person name="Yamada C."/>
            <person name="Ashburner M."/>
            <person name="Gelbart W.M."/>
            <person name="Rubin G.M."/>
            <person name="Lewis S.E."/>
        </authorList>
    </citation>
    <scope>GENOME REANNOTATION</scope>
    <source>
        <strain>Berkeley</strain>
    </source>
</reference>
<protein>
    <recommendedName>
        <fullName evidence="4">Dolichol-phosphate mannosyltransferase subunit 1</fullName>
        <shortName>DPM synthase</shortName>
        <shortName>Dolichol-phosphate mannose synthase</shortName>
        <ecNumber>2.4.1.83</ecNumber>
    </recommendedName>
    <alternativeName>
        <fullName>Dolichyl-phosphate beta-D-mannosyltransferase</fullName>
    </alternativeName>
    <alternativeName>
        <fullName>Mannose-P-dolichol synthase</fullName>
        <shortName>MPD synthase</shortName>
    </alternativeName>
</protein>
<keyword id="KW-0256">Endoplasmic reticulum</keyword>
<keyword id="KW-0328">Glycosyltransferase</keyword>
<keyword id="KW-0460">Magnesium</keyword>
<keyword id="KW-0464">Manganese</keyword>
<keyword id="KW-0479">Metal-binding</keyword>
<keyword id="KW-1185">Reference proteome</keyword>
<keyword id="KW-0808">Transferase</keyword>
<dbReference type="EC" id="2.4.1.83"/>
<dbReference type="EMBL" id="AE014134">
    <property type="protein sequence ID" value="AAF53817.1"/>
    <property type="molecule type" value="Genomic_DNA"/>
</dbReference>
<dbReference type="RefSeq" id="NP_609980.1">
    <property type="nucleotide sequence ID" value="NM_136136.3"/>
</dbReference>
<dbReference type="SMR" id="Q9VIU7"/>
<dbReference type="DIP" id="DIP-17174N"/>
<dbReference type="FunCoup" id="Q9VIU7">
    <property type="interactions" value="1625"/>
</dbReference>
<dbReference type="IntAct" id="Q9VIU7">
    <property type="interactions" value="1"/>
</dbReference>
<dbReference type="STRING" id="7227.FBpp0080817"/>
<dbReference type="CAZy" id="GT2">
    <property type="family name" value="Glycosyltransferase Family 2"/>
</dbReference>
<dbReference type="PaxDb" id="7227-FBpp0080817"/>
<dbReference type="DNASU" id="35240"/>
<dbReference type="EnsemblMetazoa" id="FBtr0081279">
    <property type="protein sequence ID" value="FBpp0080817"/>
    <property type="gene ID" value="FBgn0032799"/>
</dbReference>
<dbReference type="GeneID" id="35240"/>
<dbReference type="KEGG" id="dme:Dmel_CG10166"/>
<dbReference type="UCSC" id="CG10166-RA">
    <property type="organism name" value="d. melanogaster"/>
</dbReference>
<dbReference type="AGR" id="FB:FBgn0032799"/>
<dbReference type="CTD" id="8813"/>
<dbReference type="FlyBase" id="FBgn0032799">
    <property type="gene designation" value="Dpm1"/>
</dbReference>
<dbReference type="VEuPathDB" id="VectorBase:FBgn0032799"/>
<dbReference type="eggNOG" id="KOG2978">
    <property type="taxonomic scope" value="Eukaryota"/>
</dbReference>
<dbReference type="GeneTree" id="ENSGT00940000153481"/>
<dbReference type="HOGENOM" id="CLU_033536_13_3_1"/>
<dbReference type="InParanoid" id="Q9VIU7"/>
<dbReference type="OMA" id="KCFRREV"/>
<dbReference type="OrthoDB" id="2603at2759"/>
<dbReference type="PhylomeDB" id="Q9VIU7"/>
<dbReference type="UniPathway" id="UPA00378"/>
<dbReference type="BioGRID-ORCS" id="35240">
    <property type="hits" value="0 hits in 1 CRISPR screen"/>
</dbReference>
<dbReference type="ChiTaRS" id="CG10166">
    <property type="organism name" value="fly"/>
</dbReference>
<dbReference type="GenomeRNAi" id="35240"/>
<dbReference type="PRO" id="PR:Q9VIU7"/>
<dbReference type="Proteomes" id="UP000000803">
    <property type="component" value="Chromosome 2L"/>
</dbReference>
<dbReference type="Bgee" id="FBgn0032799">
    <property type="expression patterns" value="Expressed in spermathecum and 101 other cell types or tissues"/>
</dbReference>
<dbReference type="ExpressionAtlas" id="Q9VIU7">
    <property type="expression patterns" value="baseline and differential"/>
</dbReference>
<dbReference type="GO" id="GO:0033185">
    <property type="term" value="C:dolichol-phosphate-mannose synthase complex"/>
    <property type="evidence" value="ECO:0000250"/>
    <property type="project" value="FlyBase"/>
</dbReference>
<dbReference type="GO" id="GO:0005789">
    <property type="term" value="C:endoplasmic reticulum membrane"/>
    <property type="evidence" value="ECO:0000318"/>
    <property type="project" value="GO_Central"/>
</dbReference>
<dbReference type="GO" id="GO:0004582">
    <property type="term" value="F:dolichyl-phosphate beta-D-mannosyltransferase activity"/>
    <property type="evidence" value="ECO:0000250"/>
    <property type="project" value="UniProtKB"/>
</dbReference>
<dbReference type="GO" id="GO:0046872">
    <property type="term" value="F:metal ion binding"/>
    <property type="evidence" value="ECO:0000250"/>
    <property type="project" value="UniProtKB"/>
</dbReference>
<dbReference type="GO" id="GO:0180047">
    <property type="term" value="P:dolichol phosphate mannose biosynthetic process"/>
    <property type="evidence" value="ECO:0000250"/>
    <property type="project" value="UniProtKB"/>
</dbReference>
<dbReference type="GO" id="GO:0006488">
    <property type="term" value="P:dolichol-linked oligosaccharide biosynthetic process"/>
    <property type="evidence" value="ECO:0000318"/>
    <property type="project" value="GO_Central"/>
</dbReference>
<dbReference type="GO" id="GO:0006506">
    <property type="term" value="P:GPI anchor biosynthetic process"/>
    <property type="evidence" value="ECO:0000318"/>
    <property type="project" value="GO_Central"/>
</dbReference>
<dbReference type="GO" id="GO:0006486">
    <property type="term" value="P:protein glycosylation"/>
    <property type="evidence" value="ECO:0000250"/>
    <property type="project" value="FlyBase"/>
</dbReference>
<dbReference type="GO" id="GO:0035269">
    <property type="term" value="P:protein O-linked mannosylation"/>
    <property type="evidence" value="ECO:0000250"/>
    <property type="project" value="UniProtKB"/>
</dbReference>
<dbReference type="CDD" id="cd06442">
    <property type="entry name" value="DPM1_like"/>
    <property type="match status" value="1"/>
</dbReference>
<dbReference type="FunFam" id="3.90.550.10:FF:000036">
    <property type="entry name" value="Dolichol-phosphate mannosyltransferase subunit 1"/>
    <property type="match status" value="1"/>
</dbReference>
<dbReference type="Gene3D" id="3.90.550.10">
    <property type="entry name" value="Spore Coat Polysaccharide Biosynthesis Protein SpsA, Chain A"/>
    <property type="match status" value="1"/>
</dbReference>
<dbReference type="InterPro" id="IPR039528">
    <property type="entry name" value="DPM1-like"/>
</dbReference>
<dbReference type="InterPro" id="IPR001173">
    <property type="entry name" value="Glyco_trans_2-like"/>
</dbReference>
<dbReference type="InterPro" id="IPR029044">
    <property type="entry name" value="Nucleotide-diphossugar_trans"/>
</dbReference>
<dbReference type="PANTHER" id="PTHR43398">
    <property type="entry name" value="DOLICHOL-PHOSPHATE MANNOSYLTRANSFERASE SUBUNIT 1"/>
    <property type="match status" value="1"/>
</dbReference>
<dbReference type="PANTHER" id="PTHR43398:SF1">
    <property type="entry name" value="DOLICHOL-PHOSPHATE MANNOSYLTRANSFERASE SUBUNIT 1"/>
    <property type="match status" value="1"/>
</dbReference>
<dbReference type="Pfam" id="PF00535">
    <property type="entry name" value="Glycos_transf_2"/>
    <property type="match status" value="1"/>
</dbReference>
<dbReference type="SUPFAM" id="SSF53448">
    <property type="entry name" value="Nucleotide-diphospho-sugar transferases"/>
    <property type="match status" value="1"/>
</dbReference>
<gene>
    <name evidence="4" type="primary">Dpm1</name>
    <name evidence="4" type="ORF">CG10166</name>
</gene>
<accession>Q9VIU7</accession>
<name>DPM1_DROME</name>
<comment type="function">
    <text evidence="1">Transfers mannose from GDP-mannose to dolichol monophosphate to form dolichol phosphate mannose (Dol-P-Man) which is the mannosyl donor in pathways leading to N-glycosylation, glycosyl phosphatidylinositol membrane anchoring, and O-mannosylation of proteins.</text>
</comment>
<comment type="catalytic activity">
    <reaction evidence="1">
        <text>a di-trans,poly-cis-dolichyl phosphate + GDP-alpha-D-mannose = a di-trans,poly-cis-dolichyl beta-D-mannosyl phosphate + GDP</text>
        <dbReference type="Rhea" id="RHEA:21184"/>
        <dbReference type="Rhea" id="RHEA-COMP:19498"/>
        <dbReference type="Rhea" id="RHEA-COMP:19501"/>
        <dbReference type="ChEBI" id="CHEBI:57527"/>
        <dbReference type="ChEBI" id="CHEBI:57683"/>
        <dbReference type="ChEBI" id="CHEBI:58189"/>
        <dbReference type="ChEBI" id="CHEBI:58211"/>
        <dbReference type="EC" id="2.4.1.83"/>
    </reaction>
</comment>
<comment type="cofactor">
    <cofactor evidence="2">
        <name>Mg(2+)</name>
        <dbReference type="ChEBI" id="CHEBI:18420"/>
    </cofactor>
    <cofactor evidence="2">
        <name>Mn(2+)</name>
        <dbReference type="ChEBI" id="CHEBI:29035"/>
    </cofactor>
    <cofactor evidence="2">
        <name>Ca(2+)</name>
        <dbReference type="ChEBI" id="CHEBI:29108"/>
    </cofactor>
    <text evidence="2">Binds 1 divalent metal cation.</text>
</comment>
<comment type="pathway">
    <text evidence="1">Protein modification; protein glycosylation.</text>
</comment>
<comment type="subcellular location">
    <subcellularLocation>
        <location evidence="1">Endoplasmic reticulum</location>
    </subcellularLocation>
</comment>
<comment type="similarity">
    <text evidence="3">Belongs to the glycosyltransferase 2 family.</text>
</comment>
<evidence type="ECO:0000250" key="1">
    <source>
        <dbReference type="UniProtKB" id="O60762"/>
    </source>
</evidence>
<evidence type="ECO:0000250" key="2">
    <source>
        <dbReference type="UniProtKB" id="Q8U4M3"/>
    </source>
</evidence>
<evidence type="ECO:0000305" key="3"/>
<evidence type="ECO:0000312" key="4">
    <source>
        <dbReference type="FlyBase" id="FBgn0032799"/>
    </source>
</evidence>
<organism>
    <name type="scientific">Drosophila melanogaster</name>
    <name type="common">Fruit fly</name>
    <dbReference type="NCBI Taxonomy" id="7227"/>
    <lineage>
        <taxon>Eukaryota</taxon>
        <taxon>Metazoa</taxon>
        <taxon>Ecdysozoa</taxon>
        <taxon>Arthropoda</taxon>
        <taxon>Hexapoda</taxon>
        <taxon>Insecta</taxon>
        <taxon>Pterygota</taxon>
        <taxon>Neoptera</taxon>
        <taxon>Endopterygota</taxon>
        <taxon>Diptera</taxon>
        <taxon>Brachycera</taxon>
        <taxon>Muscomorpha</taxon>
        <taxon>Ephydroidea</taxon>
        <taxon>Drosophilidae</taxon>
        <taxon>Drosophila</taxon>
        <taxon>Sophophora</taxon>
    </lineage>
</organism>
<sequence>MPTNGHKYSILMPTYNEKDNLPIIIWLIVKYMKASGLEYEVIVIDDGSPDGTLDVAKDLQKIYGEDKIVLRPRGSKLGLGTAYIHGIKHATGDFIVIIDADLSHHPKFIPEFIKLQQEGNYDIVSGTRYAGNGGVFGWDFKRKLISRGANFLSQVLLRPNASDLTGSFRLYKKDVLEKCIASCVSKGYVFQMEMLVRARQHGYTIAEVPITFVDRIYGTSKLGGTEIIQFAKNLLYLFATT</sequence>
<feature type="chain" id="PRO_0000059172" description="Dolichol-phosphate mannosyltransferase subunit 1">
    <location>
        <begin position="1"/>
        <end position="241"/>
    </location>
</feature>
<feature type="binding site" evidence="2">
    <location>
        <position position="13"/>
    </location>
    <ligand>
        <name>GDP-alpha-D-mannose</name>
        <dbReference type="ChEBI" id="CHEBI:57527"/>
    </ligand>
</feature>
<feature type="binding site" evidence="2">
    <location>
        <position position="15"/>
    </location>
    <ligand>
        <name>GDP-alpha-D-mannose</name>
        <dbReference type="ChEBI" id="CHEBI:57527"/>
    </ligand>
</feature>
<feature type="binding site" evidence="2">
    <location>
        <position position="17"/>
    </location>
    <ligand>
        <name>GDP-alpha-D-mannose</name>
        <dbReference type="ChEBI" id="CHEBI:57527"/>
    </ligand>
</feature>
<feature type="binding site" evidence="2">
    <location>
        <position position="44"/>
    </location>
    <ligand>
        <name>GDP-alpha-D-mannose</name>
        <dbReference type="ChEBI" id="CHEBI:57527"/>
    </ligand>
</feature>
<feature type="binding site" evidence="2">
    <location>
        <position position="46"/>
    </location>
    <ligand>
        <name>GDP-alpha-D-mannose</name>
        <dbReference type="ChEBI" id="CHEBI:57527"/>
    </ligand>
</feature>
<feature type="binding site" evidence="2">
    <location>
        <position position="99"/>
    </location>
    <ligand>
        <name>GDP-alpha-D-mannose</name>
        <dbReference type="ChEBI" id="CHEBI:57527"/>
    </ligand>
</feature>
<feature type="binding site" evidence="2">
    <location>
        <position position="100"/>
    </location>
    <ligand>
        <name>GDP-alpha-D-mannose</name>
        <dbReference type="ChEBI" id="CHEBI:57527"/>
    </ligand>
</feature>
<feature type="binding site" evidence="2">
    <location>
        <position position="101"/>
    </location>
    <ligand>
        <name>GDP-alpha-D-mannose</name>
        <dbReference type="ChEBI" id="CHEBI:57527"/>
    </ligand>
</feature>
<feature type="binding site" evidence="2">
    <location>
        <position position="101"/>
    </location>
    <ligand>
        <name>Mg(2+)</name>
        <dbReference type="ChEBI" id="CHEBI:18420"/>
    </ligand>
</feature>
<feature type="binding site" evidence="2">
    <location>
        <position position="101"/>
    </location>
    <ligand>
        <name>Mn(2+)</name>
        <dbReference type="ChEBI" id="CHEBI:29035"/>
    </ligand>
</feature>
<feature type="binding site" evidence="2">
    <location>
        <position position="128"/>
    </location>
    <ligand>
        <name>GDP-alpha-D-mannose</name>
        <dbReference type="ChEBI" id="CHEBI:57527"/>
    </ligand>
</feature>
<feature type="binding site" evidence="2">
    <location>
        <position position="215"/>
    </location>
    <ligand>
        <name>GDP-alpha-D-mannose</name>
        <dbReference type="ChEBI" id="CHEBI:57527"/>
    </ligand>
</feature>
<feature type="binding site" evidence="2">
    <location>
        <position position="221"/>
    </location>
    <ligand>
        <name>GDP-alpha-D-mannose</name>
        <dbReference type="ChEBI" id="CHEBI:57527"/>
    </ligand>
</feature>
<proteinExistence type="inferred from homology"/>